<protein>
    <recommendedName>
        <fullName>Type-2Ba cytolytic delta-endotoxin</fullName>
    </recommendedName>
    <alternativeName>
        <fullName>29 kDa cytolytic toxin</fullName>
    </alternativeName>
</protein>
<reference key="1">
    <citation type="journal article" date="1997" name="Appl. Environ. Microbiol.">
        <title>Identification and characterization of a previously undescribed cyt gene in Bacillus thuringiensis subsp. israelensis.</title>
        <authorList>
            <person name="Guerchicoff A."/>
            <person name="Ugalde R.A."/>
            <person name="Rubinstein C.P."/>
        </authorList>
    </citation>
    <scope>NUCLEOTIDE SEQUENCE [GENOMIC DNA]</scope>
    <source>
        <strain>4Q2</strain>
    </source>
</reference>
<reference key="2">
    <citation type="submission" date="1999-12" db="EMBL/GenBank/DDBJ databases">
        <title>Cloning and expression of a cyt2Ba gene from Bacillus thuringiensis, strain T301.</title>
        <authorList>
            <person name="Yu J."/>
            <person name="Pang Y."/>
        </authorList>
    </citation>
    <scope>NUCLEOTIDE SEQUENCE [GENOMIC DNA]</scope>
    <source>
        <strain>T301</strain>
    </source>
</reference>
<keyword id="KW-0002">3D-structure</keyword>
<keyword id="KW-0614">Plasmid</keyword>
<keyword id="KW-0749">Sporulation</keyword>
<keyword id="KW-0800">Toxin</keyword>
<keyword id="KW-0843">Virulence</keyword>
<dbReference type="EMBL" id="U52043">
    <property type="protein sequence ID" value="AAB63254.1"/>
    <property type="molecule type" value="Genomic_DNA"/>
</dbReference>
<dbReference type="EMBL" id="AF215645">
    <property type="protein sequence ID" value="AAF37222.1"/>
    <property type="molecule type" value="Genomic_DNA"/>
</dbReference>
<dbReference type="RefSeq" id="WP_000550493.1">
    <property type="nucleotide sequence ID" value="NZ_VEIF01000053.1"/>
</dbReference>
<dbReference type="PDB" id="2RCI">
    <property type="method" value="X-ray"/>
    <property type="resolution" value="1.80 A"/>
    <property type="chains" value="A=35-238"/>
</dbReference>
<dbReference type="PDBsum" id="2RCI"/>
<dbReference type="SMR" id="Q45723"/>
<dbReference type="TCDB" id="1.C.71.1.3">
    <property type="family name" value="the cytolytic delta endotoxin (cyt1/2) family"/>
</dbReference>
<dbReference type="EvolutionaryTrace" id="Q45723"/>
<dbReference type="GO" id="GO:0005576">
    <property type="term" value="C:extracellular region"/>
    <property type="evidence" value="ECO:0007669"/>
    <property type="project" value="InterPro"/>
</dbReference>
<dbReference type="GO" id="GO:0090729">
    <property type="term" value="F:toxin activity"/>
    <property type="evidence" value="ECO:0007669"/>
    <property type="project" value="UniProtKB-KW"/>
</dbReference>
<dbReference type="GO" id="GO:0030435">
    <property type="term" value="P:sporulation resulting in formation of a cellular spore"/>
    <property type="evidence" value="ECO:0007669"/>
    <property type="project" value="UniProtKB-KW"/>
</dbReference>
<dbReference type="Gene3D" id="3.40.198.10">
    <property type="entry name" value="Delta-endotoxin CytB-like"/>
    <property type="match status" value="1"/>
</dbReference>
<dbReference type="InterPro" id="IPR035918">
    <property type="entry name" value="CytB_endotoxin-like_sf"/>
</dbReference>
<dbReference type="InterPro" id="IPR001615">
    <property type="entry name" value="Endotoxin_CytB"/>
</dbReference>
<dbReference type="Pfam" id="PF01338">
    <property type="entry name" value="Bac_thur_toxin"/>
    <property type="match status" value="1"/>
</dbReference>
<dbReference type="SUPFAM" id="SSF55676">
    <property type="entry name" value="CytB endotoxin-like"/>
    <property type="match status" value="1"/>
</dbReference>
<sequence length="263" mass="29843">MHLNNLNNFNNLENNGEYHCSGPIIKKPFRHIALTVPSSDITNFNEIFYVEPQYIAQAIRLTNTFQGAIDPLTLNFNFEKALQIANGLPNAGVTGTINQSVIHQTIEVSVMISQIKEIIRSVLGLVINSANFWNSVVSAITNTFTNLEPQVDENWIVWRNLSATQTSYFYKILFSIQNEDTGRFMAILPIAFEITVDVQKQQLLFITIKDSARYEVKMKALTVVQALDSYNAPIIDVFNVRNYSLHRPNHNILQNLNVNPIKS</sequence>
<feature type="chain" id="PRO_0000174109" description="Type-2Ba cytolytic delta-endotoxin">
    <location>
        <begin position="1"/>
        <end position="263"/>
    </location>
</feature>
<feature type="strand" evidence="3">
    <location>
        <begin position="44"/>
        <end position="50"/>
    </location>
</feature>
<feature type="helix" evidence="3">
    <location>
        <begin position="52"/>
        <end position="54"/>
    </location>
</feature>
<feature type="helix" evidence="3">
    <location>
        <begin position="55"/>
        <end position="65"/>
    </location>
</feature>
<feature type="helix" evidence="3">
    <location>
        <begin position="66"/>
        <end position="68"/>
    </location>
</feature>
<feature type="turn" evidence="3">
    <location>
        <begin position="71"/>
        <end position="73"/>
    </location>
</feature>
<feature type="helix" evidence="3">
    <location>
        <begin position="78"/>
        <end position="87"/>
    </location>
</feature>
<feature type="strand" evidence="3">
    <location>
        <begin position="91"/>
        <end position="107"/>
    </location>
</feature>
<feature type="helix" evidence="3">
    <location>
        <begin position="108"/>
        <end position="123"/>
    </location>
</feature>
<feature type="helix" evidence="3">
    <location>
        <begin position="130"/>
        <end position="144"/>
    </location>
</feature>
<feature type="helix" evidence="3">
    <location>
        <begin position="148"/>
        <end position="150"/>
    </location>
</feature>
<feature type="strand" evidence="3">
    <location>
        <begin position="156"/>
        <end position="161"/>
    </location>
</feature>
<feature type="strand" evidence="3">
    <location>
        <begin position="166"/>
        <end position="176"/>
    </location>
</feature>
<feature type="helix" evidence="3">
    <location>
        <begin position="179"/>
        <end position="181"/>
    </location>
</feature>
<feature type="strand" evidence="3">
    <location>
        <begin position="184"/>
        <end position="198"/>
    </location>
</feature>
<feature type="helix" evidence="3">
    <location>
        <begin position="200"/>
        <end position="203"/>
    </location>
</feature>
<feature type="strand" evidence="3">
    <location>
        <begin position="211"/>
        <end position="226"/>
    </location>
</feature>
<gene>
    <name type="primary">cyt2Ba1</name>
    <name type="synonym">cyt2Ba7</name>
    <name type="synonym">cytB</name>
</gene>
<accession>Q45723</accession>
<proteinExistence type="evidence at protein level"/>
<organism>
    <name type="scientific">Bacillus thuringiensis subsp. israelensis</name>
    <dbReference type="NCBI Taxonomy" id="1430"/>
    <lineage>
        <taxon>Bacteria</taxon>
        <taxon>Bacillati</taxon>
        <taxon>Bacillota</taxon>
        <taxon>Bacilli</taxon>
        <taxon>Bacillales</taxon>
        <taxon>Bacillaceae</taxon>
        <taxon>Bacillus</taxon>
        <taxon>Bacillus cereus group</taxon>
    </lineage>
</organism>
<comment type="function">
    <text evidence="1">Kills the larvae of dipteran insects by making pores in the epithelial cell membrane of the insect midgut.</text>
</comment>
<comment type="developmental stage">
    <text>The crystal protein is produced during sporulation and is accumulated both as an inclusion and as part of the spore coat.</text>
</comment>
<comment type="PTM">
    <text evidence="1">Active after proteolytic processing.</text>
</comment>
<comment type="similarity">
    <text evidence="2">Belongs to the cyt1/cyt2 endotoxin family.</text>
</comment>
<name>CT2BA_BACTI</name>
<geneLocation type="plasmid">
    <name>pRX80</name>
</geneLocation>
<evidence type="ECO:0000250" key="1"/>
<evidence type="ECO:0000305" key="2"/>
<evidence type="ECO:0007829" key="3">
    <source>
        <dbReference type="PDB" id="2RCI"/>
    </source>
</evidence>